<dbReference type="EC" id="3.5.2.3" evidence="1"/>
<dbReference type="EMBL" id="CP001396">
    <property type="protein sequence ID" value="ACR62763.1"/>
    <property type="molecule type" value="Genomic_DNA"/>
</dbReference>
<dbReference type="RefSeq" id="WP_000126534.1">
    <property type="nucleotide sequence ID" value="NC_012759.1"/>
</dbReference>
<dbReference type="SMR" id="C4ZS02"/>
<dbReference type="MEROPS" id="M38.A02"/>
<dbReference type="GeneID" id="75203649"/>
<dbReference type="KEGG" id="ebw:BWG_0910"/>
<dbReference type="HOGENOM" id="CLU_041558_1_0_6"/>
<dbReference type="UniPathway" id="UPA00070">
    <property type="reaction ID" value="UER00117"/>
</dbReference>
<dbReference type="GO" id="GO:0005829">
    <property type="term" value="C:cytosol"/>
    <property type="evidence" value="ECO:0007669"/>
    <property type="project" value="TreeGrafter"/>
</dbReference>
<dbReference type="GO" id="GO:0004151">
    <property type="term" value="F:dihydroorotase activity"/>
    <property type="evidence" value="ECO:0007669"/>
    <property type="project" value="UniProtKB-UniRule"/>
</dbReference>
<dbReference type="GO" id="GO:0008270">
    <property type="term" value="F:zinc ion binding"/>
    <property type="evidence" value="ECO:0007669"/>
    <property type="project" value="UniProtKB-UniRule"/>
</dbReference>
<dbReference type="GO" id="GO:0006207">
    <property type="term" value="P:'de novo' pyrimidine nucleobase biosynthetic process"/>
    <property type="evidence" value="ECO:0007669"/>
    <property type="project" value="TreeGrafter"/>
</dbReference>
<dbReference type="GO" id="GO:0044205">
    <property type="term" value="P:'de novo' UMP biosynthetic process"/>
    <property type="evidence" value="ECO:0007669"/>
    <property type="project" value="UniProtKB-UniRule"/>
</dbReference>
<dbReference type="CDD" id="cd01294">
    <property type="entry name" value="DHOase"/>
    <property type="match status" value="1"/>
</dbReference>
<dbReference type="FunFam" id="3.20.20.140:FF:000006">
    <property type="entry name" value="Dihydroorotase"/>
    <property type="match status" value="1"/>
</dbReference>
<dbReference type="Gene3D" id="3.20.20.140">
    <property type="entry name" value="Metal-dependent hydrolases"/>
    <property type="match status" value="1"/>
</dbReference>
<dbReference type="HAMAP" id="MF_00219">
    <property type="entry name" value="PyrC_classII"/>
    <property type="match status" value="1"/>
</dbReference>
<dbReference type="InterPro" id="IPR006680">
    <property type="entry name" value="Amidohydro-rel"/>
</dbReference>
<dbReference type="InterPro" id="IPR004721">
    <property type="entry name" value="DHOdimr"/>
</dbReference>
<dbReference type="InterPro" id="IPR002195">
    <property type="entry name" value="Dihydroorotase_CS"/>
</dbReference>
<dbReference type="InterPro" id="IPR032466">
    <property type="entry name" value="Metal_Hydrolase"/>
</dbReference>
<dbReference type="NCBIfam" id="TIGR00856">
    <property type="entry name" value="pyrC_dimer"/>
    <property type="match status" value="1"/>
</dbReference>
<dbReference type="PANTHER" id="PTHR43137">
    <property type="entry name" value="DIHYDROOROTASE"/>
    <property type="match status" value="1"/>
</dbReference>
<dbReference type="PANTHER" id="PTHR43137:SF1">
    <property type="entry name" value="DIHYDROOROTASE"/>
    <property type="match status" value="1"/>
</dbReference>
<dbReference type="Pfam" id="PF01979">
    <property type="entry name" value="Amidohydro_1"/>
    <property type="match status" value="1"/>
</dbReference>
<dbReference type="PIRSF" id="PIRSF001237">
    <property type="entry name" value="DHOdimr"/>
    <property type="match status" value="1"/>
</dbReference>
<dbReference type="SUPFAM" id="SSF51556">
    <property type="entry name" value="Metallo-dependent hydrolases"/>
    <property type="match status" value="1"/>
</dbReference>
<dbReference type="PROSITE" id="PS00482">
    <property type="entry name" value="DIHYDROOROTASE_1"/>
    <property type="match status" value="1"/>
</dbReference>
<dbReference type="PROSITE" id="PS00483">
    <property type="entry name" value="DIHYDROOROTASE_2"/>
    <property type="match status" value="1"/>
</dbReference>
<name>PYRC_ECOBW</name>
<protein>
    <recommendedName>
        <fullName evidence="1">Dihydroorotase</fullName>
        <shortName evidence="1">DHOase</shortName>
        <ecNumber evidence="1">3.5.2.3</ecNumber>
    </recommendedName>
</protein>
<feature type="chain" id="PRO_1000204245" description="Dihydroorotase">
    <location>
        <begin position="1"/>
        <end position="348"/>
    </location>
</feature>
<feature type="active site" evidence="1">
    <location>
        <position position="251"/>
    </location>
</feature>
<feature type="binding site" evidence="1">
    <location>
        <position position="17"/>
    </location>
    <ligand>
        <name>Zn(2+)</name>
        <dbReference type="ChEBI" id="CHEBI:29105"/>
        <label>1</label>
    </ligand>
</feature>
<feature type="binding site" evidence="1">
    <location>
        <begin position="19"/>
        <end position="21"/>
    </location>
    <ligand>
        <name>substrate</name>
    </ligand>
</feature>
<feature type="binding site" evidence="1">
    <location>
        <position position="19"/>
    </location>
    <ligand>
        <name>Zn(2+)</name>
        <dbReference type="ChEBI" id="CHEBI:29105"/>
        <label>1</label>
    </ligand>
</feature>
<feature type="binding site" evidence="1">
    <location>
        <position position="45"/>
    </location>
    <ligand>
        <name>substrate</name>
    </ligand>
</feature>
<feature type="binding site" description="via carbamate group" evidence="1">
    <location>
        <position position="103"/>
    </location>
    <ligand>
        <name>Zn(2+)</name>
        <dbReference type="ChEBI" id="CHEBI:29105"/>
        <label>1</label>
    </ligand>
</feature>
<feature type="binding site" description="via carbamate group" evidence="1">
    <location>
        <position position="103"/>
    </location>
    <ligand>
        <name>Zn(2+)</name>
        <dbReference type="ChEBI" id="CHEBI:29105"/>
        <label>2</label>
    </ligand>
</feature>
<feature type="binding site" evidence="1">
    <location>
        <position position="140"/>
    </location>
    <ligand>
        <name>substrate</name>
    </ligand>
</feature>
<feature type="binding site" evidence="1">
    <location>
        <position position="140"/>
    </location>
    <ligand>
        <name>Zn(2+)</name>
        <dbReference type="ChEBI" id="CHEBI:29105"/>
        <label>2</label>
    </ligand>
</feature>
<feature type="binding site" evidence="1">
    <location>
        <position position="178"/>
    </location>
    <ligand>
        <name>Zn(2+)</name>
        <dbReference type="ChEBI" id="CHEBI:29105"/>
        <label>2</label>
    </ligand>
</feature>
<feature type="binding site" evidence="1">
    <location>
        <position position="223"/>
    </location>
    <ligand>
        <name>substrate</name>
    </ligand>
</feature>
<feature type="binding site" evidence="1">
    <location>
        <position position="251"/>
    </location>
    <ligand>
        <name>Zn(2+)</name>
        <dbReference type="ChEBI" id="CHEBI:29105"/>
        <label>1</label>
    </ligand>
</feature>
<feature type="binding site" evidence="1">
    <location>
        <position position="255"/>
    </location>
    <ligand>
        <name>substrate</name>
    </ligand>
</feature>
<feature type="binding site" evidence="1">
    <location>
        <position position="267"/>
    </location>
    <ligand>
        <name>substrate</name>
    </ligand>
</feature>
<feature type="modified residue" description="N6-carboxylysine" evidence="1">
    <location>
        <position position="103"/>
    </location>
</feature>
<proteinExistence type="inferred from homology"/>
<gene>
    <name evidence="1" type="primary">pyrC</name>
    <name type="ordered locus">BWG_0910</name>
</gene>
<sequence length="348" mass="38827">MTAPSQVLKIRRPDDWHLHLRDGDMLKTVVPYTSEIYGRAIVMPNLAPPVTTVEAAVAYRQRILDAVPAGHDFTPLMTCYLTDSLDPNELERGFNEGVFTAAKLYPANATTNSSHGVTSIDAIMPVLERMEKIGMPLLVHGEVTHADIDIFDREARFIESVMEPLRQRLTALKVVFEHITTKDAADYVRDGNERLAATITPQHLMFNRNHMLVGGVRPHLYCLPILKRNIHQQALRELVASGFNRVFLGTDSAPHARHRKESSCGCAGCFNAPTALGSYATVFEEMNALQHFEAFCSVNGPQFYGLPVNDTFIELVREEQQVAESIALTDDTLVPFLAGETVRWSVKQ</sequence>
<evidence type="ECO:0000255" key="1">
    <source>
        <dbReference type="HAMAP-Rule" id="MF_00219"/>
    </source>
</evidence>
<accession>C4ZS02</accession>
<comment type="function">
    <text evidence="1">Catalyzes the reversible cyclization of carbamoyl aspartate to dihydroorotate.</text>
</comment>
<comment type="catalytic activity">
    <reaction evidence="1">
        <text>(S)-dihydroorotate + H2O = N-carbamoyl-L-aspartate + H(+)</text>
        <dbReference type="Rhea" id="RHEA:24296"/>
        <dbReference type="ChEBI" id="CHEBI:15377"/>
        <dbReference type="ChEBI" id="CHEBI:15378"/>
        <dbReference type="ChEBI" id="CHEBI:30864"/>
        <dbReference type="ChEBI" id="CHEBI:32814"/>
        <dbReference type="EC" id="3.5.2.3"/>
    </reaction>
</comment>
<comment type="cofactor">
    <cofactor evidence="1">
        <name>Zn(2+)</name>
        <dbReference type="ChEBI" id="CHEBI:29105"/>
    </cofactor>
    <text evidence="1">Binds 2 Zn(2+) ions per subunit.</text>
</comment>
<comment type="pathway">
    <text evidence="1">Pyrimidine metabolism; UMP biosynthesis via de novo pathway; (S)-dihydroorotate from bicarbonate: step 3/3.</text>
</comment>
<comment type="subunit">
    <text evidence="1">Homodimer.</text>
</comment>
<comment type="similarity">
    <text evidence="1">Belongs to the metallo-dependent hydrolases superfamily. DHOase family. Class II DHOase subfamily.</text>
</comment>
<organism>
    <name type="scientific">Escherichia coli (strain K12 / MC4100 / BW2952)</name>
    <dbReference type="NCBI Taxonomy" id="595496"/>
    <lineage>
        <taxon>Bacteria</taxon>
        <taxon>Pseudomonadati</taxon>
        <taxon>Pseudomonadota</taxon>
        <taxon>Gammaproteobacteria</taxon>
        <taxon>Enterobacterales</taxon>
        <taxon>Enterobacteriaceae</taxon>
        <taxon>Escherichia</taxon>
    </lineage>
</organism>
<keyword id="KW-0378">Hydrolase</keyword>
<keyword id="KW-0479">Metal-binding</keyword>
<keyword id="KW-0665">Pyrimidine biosynthesis</keyword>
<keyword id="KW-0862">Zinc</keyword>
<reference key="1">
    <citation type="journal article" date="2009" name="J. Bacteriol.">
        <title>Genomic sequencing reveals regulatory mutations and recombinational events in the widely used MC4100 lineage of Escherichia coli K-12.</title>
        <authorList>
            <person name="Ferenci T."/>
            <person name="Zhou Z."/>
            <person name="Betteridge T."/>
            <person name="Ren Y."/>
            <person name="Liu Y."/>
            <person name="Feng L."/>
            <person name="Reeves P.R."/>
            <person name="Wang L."/>
        </authorList>
    </citation>
    <scope>NUCLEOTIDE SEQUENCE [LARGE SCALE GENOMIC DNA]</scope>
    <source>
        <strain>K12 / MC4100 / BW2952</strain>
    </source>
</reference>